<proteinExistence type="evidence at transcript level"/>
<protein>
    <recommendedName>
        <fullName evidence="7">Probable monoterpene synthase MTS1, chloroplastic</fullName>
        <shortName evidence="6">HlMTS1</shortName>
        <ecNumber evidence="7">4.2.3.-</ecNumber>
    </recommendedName>
</protein>
<accession>B6SCF3</accession>
<dbReference type="EC" id="4.2.3.-" evidence="7"/>
<dbReference type="EMBL" id="EU760348">
    <property type="protein sequence ID" value="ACI32637.1"/>
    <property type="molecule type" value="mRNA"/>
</dbReference>
<dbReference type="SMR" id="B6SCF3"/>
<dbReference type="GO" id="GO:0009507">
    <property type="term" value="C:chloroplast"/>
    <property type="evidence" value="ECO:0007669"/>
    <property type="project" value="UniProtKB-SubCell"/>
</dbReference>
<dbReference type="GO" id="GO:0000287">
    <property type="term" value="F:magnesium ion binding"/>
    <property type="evidence" value="ECO:0007669"/>
    <property type="project" value="InterPro"/>
</dbReference>
<dbReference type="GO" id="GO:0010333">
    <property type="term" value="F:terpene synthase activity"/>
    <property type="evidence" value="ECO:0007669"/>
    <property type="project" value="InterPro"/>
</dbReference>
<dbReference type="GO" id="GO:0016102">
    <property type="term" value="P:diterpenoid biosynthetic process"/>
    <property type="evidence" value="ECO:0007669"/>
    <property type="project" value="InterPro"/>
</dbReference>
<dbReference type="CDD" id="cd00684">
    <property type="entry name" value="Terpene_cyclase_plant_C1"/>
    <property type="match status" value="1"/>
</dbReference>
<dbReference type="FunFam" id="1.10.600.10:FF:000007">
    <property type="entry name" value="Isoprene synthase, chloroplastic"/>
    <property type="match status" value="1"/>
</dbReference>
<dbReference type="FunFam" id="1.50.10.130:FF:000001">
    <property type="entry name" value="Isoprene synthase, chloroplastic"/>
    <property type="match status" value="1"/>
</dbReference>
<dbReference type="Gene3D" id="1.10.600.10">
    <property type="entry name" value="Farnesyl Diphosphate Synthase"/>
    <property type="match status" value="1"/>
</dbReference>
<dbReference type="Gene3D" id="1.50.10.130">
    <property type="entry name" value="Terpene synthase, N-terminal domain"/>
    <property type="match status" value="1"/>
</dbReference>
<dbReference type="InterPro" id="IPR008949">
    <property type="entry name" value="Isoprenoid_synthase_dom_sf"/>
</dbReference>
<dbReference type="InterPro" id="IPR034741">
    <property type="entry name" value="Terpene_cyclase-like_1_C"/>
</dbReference>
<dbReference type="InterPro" id="IPR044814">
    <property type="entry name" value="Terpene_cyclase_plant_C1"/>
</dbReference>
<dbReference type="InterPro" id="IPR001906">
    <property type="entry name" value="Terpene_synth_N"/>
</dbReference>
<dbReference type="InterPro" id="IPR036965">
    <property type="entry name" value="Terpene_synth_N_sf"/>
</dbReference>
<dbReference type="InterPro" id="IPR050148">
    <property type="entry name" value="Terpene_synthase-like"/>
</dbReference>
<dbReference type="InterPro" id="IPR005630">
    <property type="entry name" value="Terpene_synthase_metal-bd"/>
</dbReference>
<dbReference type="InterPro" id="IPR008930">
    <property type="entry name" value="Terpenoid_cyclase/PrenylTrfase"/>
</dbReference>
<dbReference type="PANTHER" id="PTHR31225">
    <property type="entry name" value="OS04G0344100 PROTEIN-RELATED"/>
    <property type="match status" value="1"/>
</dbReference>
<dbReference type="PANTHER" id="PTHR31225:SF9">
    <property type="entry name" value="TERPENE SYNTHASE 10"/>
    <property type="match status" value="1"/>
</dbReference>
<dbReference type="Pfam" id="PF01397">
    <property type="entry name" value="Terpene_synth"/>
    <property type="match status" value="1"/>
</dbReference>
<dbReference type="Pfam" id="PF03936">
    <property type="entry name" value="Terpene_synth_C"/>
    <property type="match status" value="1"/>
</dbReference>
<dbReference type="SFLD" id="SFLDS00005">
    <property type="entry name" value="Isoprenoid_Synthase_Type_I"/>
    <property type="match status" value="1"/>
</dbReference>
<dbReference type="SFLD" id="SFLDG01019">
    <property type="entry name" value="Terpene_Cyclase_Like_1_C_Termi"/>
    <property type="match status" value="1"/>
</dbReference>
<dbReference type="SUPFAM" id="SSF48239">
    <property type="entry name" value="Terpenoid cyclases/Protein prenyltransferases"/>
    <property type="match status" value="1"/>
</dbReference>
<dbReference type="SUPFAM" id="SSF48576">
    <property type="entry name" value="Terpenoid synthases"/>
    <property type="match status" value="1"/>
</dbReference>
<reference key="1">
    <citation type="journal article" date="2008" name="Plant Physiol.">
        <title>Terpene biosynthesis in glandular trichomes of hop.</title>
        <authorList>
            <person name="Wang G."/>
            <person name="Tian L."/>
            <person name="Aziz N."/>
            <person name="Broun P."/>
            <person name="Dai X."/>
            <person name="He J."/>
            <person name="King A."/>
            <person name="Zhao P.X."/>
            <person name="Dixon R.A."/>
        </authorList>
    </citation>
    <scope>NUCLEOTIDE SEQUENCE [MRNA]</scope>
    <scope>TISSUE SPECIFICITY</scope>
    <source>
        <tissue>Lupulin gland</tissue>
    </source>
</reference>
<feature type="transit peptide" description="Chloroplast" evidence="3">
    <location>
        <begin position="1"/>
        <end position="31"/>
    </location>
</feature>
<feature type="chain" id="PRO_0000439240" description="Probable monoterpene synthase MTS1, chloroplastic" evidence="3">
    <location>
        <begin position="32"/>
        <end position="585"/>
    </location>
</feature>
<feature type="region of interest" description="Disordered" evidence="4">
    <location>
        <begin position="1"/>
        <end position="29"/>
    </location>
</feature>
<feature type="short sequence motif" description="DDXXD motif" evidence="7">
    <location>
        <begin position="335"/>
        <end position="339"/>
    </location>
</feature>
<feature type="compositionally biased region" description="Polar residues" evidence="4">
    <location>
        <begin position="15"/>
        <end position="25"/>
    </location>
</feature>
<feature type="binding site" evidence="2">
    <location>
        <position position="298"/>
    </location>
    <ligand>
        <name>(2E)-geranyl diphosphate</name>
        <dbReference type="ChEBI" id="CHEBI:58057"/>
    </ligand>
</feature>
<feature type="binding site" evidence="2">
    <location>
        <position position="335"/>
    </location>
    <ligand>
        <name>(2E)-geranyl diphosphate</name>
        <dbReference type="ChEBI" id="CHEBI:58057"/>
    </ligand>
</feature>
<feature type="binding site" evidence="2">
    <location>
        <position position="335"/>
    </location>
    <ligand>
        <name>Mg(2+)</name>
        <dbReference type="ChEBI" id="CHEBI:18420"/>
        <label>1</label>
    </ligand>
</feature>
<feature type="binding site" evidence="2">
    <location>
        <position position="335"/>
    </location>
    <ligand>
        <name>Mg(2+)</name>
        <dbReference type="ChEBI" id="CHEBI:18420"/>
        <label>2</label>
    </ligand>
</feature>
<feature type="binding site" evidence="2">
    <location>
        <position position="339"/>
    </location>
    <ligand>
        <name>(2E)-geranyl diphosphate</name>
        <dbReference type="ChEBI" id="CHEBI:58057"/>
    </ligand>
</feature>
<feature type="binding site" evidence="2">
    <location>
        <position position="339"/>
    </location>
    <ligand>
        <name>Mg(2+)</name>
        <dbReference type="ChEBI" id="CHEBI:18420"/>
        <label>1</label>
    </ligand>
</feature>
<feature type="binding site" evidence="2">
    <location>
        <position position="339"/>
    </location>
    <ligand>
        <name>Mg(2+)</name>
        <dbReference type="ChEBI" id="CHEBI:18420"/>
        <label>2</label>
    </ligand>
</feature>
<feature type="binding site" evidence="2">
    <location>
        <position position="476"/>
    </location>
    <ligand>
        <name>(2E)-geranyl diphosphate</name>
        <dbReference type="ChEBI" id="CHEBI:58057"/>
    </ligand>
</feature>
<feature type="binding site" evidence="2">
    <location>
        <position position="479"/>
    </location>
    <ligand>
        <name>(2E)-geranyl diphosphate</name>
        <dbReference type="ChEBI" id="CHEBI:58057"/>
    </ligand>
</feature>
<feature type="binding site" evidence="2">
    <location>
        <position position="479"/>
    </location>
    <ligand>
        <name>Mg(2+)</name>
        <dbReference type="ChEBI" id="CHEBI:18420"/>
        <label>3</label>
    </ligand>
</feature>
<feature type="binding site" evidence="2">
    <location>
        <position position="483"/>
    </location>
    <ligand>
        <name>Mg(2+)</name>
        <dbReference type="ChEBI" id="CHEBI:18420"/>
        <label>3</label>
    </ligand>
</feature>
<feature type="binding site" evidence="2">
    <location>
        <position position="487"/>
    </location>
    <ligand>
        <name>Mg(2+)</name>
        <dbReference type="ChEBI" id="CHEBI:18420"/>
        <label>3</label>
    </ligand>
</feature>
<keyword id="KW-0150">Chloroplast</keyword>
<keyword id="KW-0456">Lyase</keyword>
<keyword id="KW-0460">Magnesium</keyword>
<keyword id="KW-0479">Metal-binding</keyword>
<keyword id="KW-0934">Plastid</keyword>
<keyword id="KW-0809">Transit peptide</keyword>
<sequence length="585" mass="67511">MSLSGVPLSAGLAPSPSNKPTNGKGQNIVRRSGNYKPALWDYDYLQSLPTLYAGEAHVEKLNKLKGEVRIMLEKTVTENPLAQLEQIDTLYRLGISYHFQDEIKALLNTIHNNNNNNNNNDDVYATALEFKLLRLYGYTVHSEVFNVFKDEIDKGFKAISLCGDYVKGMLSLYEASFYSFKGETILDEARDFSTKHLQKYVMMRHNNNSKDQSVDDDDDLVILVEYALELPMHWRMIRLEAKWFIDVYSKRRDDMNPTFLELAQIDFNLLQSTYQEDLKHVSRWWSTCKLGERLPFCRDRLVEVFLLAVALKYEAEFGYARRLLTKIGVLVTLMDDIYDVYGTLDELKLLEDAIERWNINELDQLPEYMNIFFVAMYNVVNGIAYDVLKENEILIVKYLKRAWMDACKSYMVEAKWYYSGYTPSLEEYLENGLISITIPLDLIFLYCLTTSPITEDSMEYLLQYPTILGLSGTLFRLVDDLATSSDELKRGDNPKSIQCYMHESGVCENDSREYIKNLISETWKQMNEVRVAKSPLFSQAFIESAVDFVRGAMLLYQKGDGFGTKHDGDAKDKLVSLFFNPIPTP</sequence>
<comment type="cofactor">
    <cofactor evidence="1">
        <name>Mg(2+)</name>
        <dbReference type="ChEBI" id="CHEBI:18420"/>
    </cofactor>
    <cofactor evidence="1">
        <name>Mn(2+)</name>
        <dbReference type="ChEBI" id="CHEBI:29035"/>
    </cofactor>
    <text evidence="1">Binds 3 Mg(2+) or Mn(2+) ions per subunit.</text>
</comment>
<comment type="subcellular location">
    <subcellularLocation>
        <location evidence="3">Plastid</location>
        <location evidence="3">Chloroplast</location>
    </subcellularLocation>
</comment>
<comment type="tissue specificity">
    <text evidence="5">Expressed in trichomes. Detected in flowers, but not in leaves.</text>
</comment>
<comment type="domain">
    <text evidence="2">The Asp-Asp-Xaa-Xaa-Asp/Glu (DDXXD/E) motif is important for the catalytic activity, presumably through binding to Mg(2+).</text>
</comment>
<comment type="similarity">
    <text evidence="7">Belongs to the terpene synthase family. Tpsb subfamily.</text>
</comment>
<comment type="caution">
    <text evidence="8">No monoterpene, sesquiterpene or diterpene synthase activity detected in the heterologous expression system tested.</text>
</comment>
<name>MTS1_HUMLU</name>
<organism evidence="9">
    <name type="scientific">Humulus lupulus</name>
    <name type="common">European hop</name>
    <dbReference type="NCBI Taxonomy" id="3486"/>
    <lineage>
        <taxon>Eukaryota</taxon>
        <taxon>Viridiplantae</taxon>
        <taxon>Streptophyta</taxon>
        <taxon>Embryophyta</taxon>
        <taxon>Tracheophyta</taxon>
        <taxon>Spermatophyta</taxon>
        <taxon>Magnoliopsida</taxon>
        <taxon>eudicotyledons</taxon>
        <taxon>Gunneridae</taxon>
        <taxon>Pentapetalae</taxon>
        <taxon>rosids</taxon>
        <taxon>fabids</taxon>
        <taxon>Rosales</taxon>
        <taxon>Cannabaceae</taxon>
        <taxon>Humulus</taxon>
    </lineage>
</organism>
<evidence type="ECO:0000250" key="1">
    <source>
        <dbReference type="UniProtKB" id="A0A1C9J6A7"/>
    </source>
</evidence>
<evidence type="ECO:0000250" key="2">
    <source>
        <dbReference type="UniProtKB" id="Q40577"/>
    </source>
</evidence>
<evidence type="ECO:0000255" key="3"/>
<evidence type="ECO:0000256" key="4">
    <source>
        <dbReference type="SAM" id="MobiDB-lite"/>
    </source>
</evidence>
<evidence type="ECO:0000269" key="5">
    <source>
    </source>
</evidence>
<evidence type="ECO:0000303" key="6">
    <source>
    </source>
</evidence>
<evidence type="ECO:0000305" key="7"/>
<evidence type="ECO:0000305" key="8">
    <source>
    </source>
</evidence>
<evidence type="ECO:0000312" key="9">
    <source>
        <dbReference type="EMBL" id="ACI32637.1"/>
    </source>
</evidence>